<reference key="1">
    <citation type="journal article" date="2009" name="J. Bacteriol.">
        <title>Genomic sequencing reveals regulatory mutations and recombinational events in the widely used MC4100 lineage of Escherichia coli K-12.</title>
        <authorList>
            <person name="Ferenci T."/>
            <person name="Zhou Z."/>
            <person name="Betteridge T."/>
            <person name="Ren Y."/>
            <person name="Liu Y."/>
            <person name="Feng L."/>
            <person name="Reeves P.R."/>
            <person name="Wang L."/>
        </authorList>
    </citation>
    <scope>NUCLEOTIDE SEQUENCE [LARGE SCALE GENOMIC DNA]</scope>
    <source>
        <strain>K12 / MC4100 / BW2952</strain>
    </source>
</reference>
<dbReference type="EC" id="3.2.-.-" evidence="1"/>
<dbReference type="EMBL" id="CP001396">
    <property type="protein sequence ID" value="ACR65474.1"/>
    <property type="molecule type" value="Genomic_DNA"/>
</dbReference>
<dbReference type="RefSeq" id="WP_001207520.1">
    <property type="nucleotide sequence ID" value="NC_012759.1"/>
</dbReference>
<dbReference type="SMR" id="C4ZWD8"/>
<dbReference type="KEGG" id="ebw:BWG_0522"/>
<dbReference type="HOGENOM" id="CLU_036838_2_0_6"/>
<dbReference type="GO" id="GO:0005829">
    <property type="term" value="C:cytosol"/>
    <property type="evidence" value="ECO:0007669"/>
    <property type="project" value="TreeGrafter"/>
</dbReference>
<dbReference type="GO" id="GO:0008477">
    <property type="term" value="F:purine nucleosidase activity"/>
    <property type="evidence" value="ECO:0007669"/>
    <property type="project" value="TreeGrafter"/>
</dbReference>
<dbReference type="GO" id="GO:0045437">
    <property type="term" value="F:uridine nucleosidase activity"/>
    <property type="evidence" value="ECO:0007669"/>
    <property type="project" value="InterPro"/>
</dbReference>
<dbReference type="GO" id="GO:0015949">
    <property type="term" value="P:nucleobase-containing small molecule interconversion"/>
    <property type="evidence" value="ECO:0007669"/>
    <property type="project" value="InterPro"/>
</dbReference>
<dbReference type="GO" id="GO:0006152">
    <property type="term" value="P:purine nucleoside catabolic process"/>
    <property type="evidence" value="ECO:0007669"/>
    <property type="project" value="TreeGrafter"/>
</dbReference>
<dbReference type="GO" id="GO:0006206">
    <property type="term" value="P:pyrimidine nucleobase metabolic process"/>
    <property type="evidence" value="ECO:0007669"/>
    <property type="project" value="UniProtKB-UniRule"/>
</dbReference>
<dbReference type="CDD" id="cd02651">
    <property type="entry name" value="nuc_hydro_IU_UC_XIUA"/>
    <property type="match status" value="1"/>
</dbReference>
<dbReference type="FunFam" id="3.90.245.10:FF:000001">
    <property type="entry name" value="Pyrimidine-specific ribonucleoside hydrolase RihA"/>
    <property type="match status" value="1"/>
</dbReference>
<dbReference type="Gene3D" id="3.90.245.10">
    <property type="entry name" value="Ribonucleoside hydrolase-like"/>
    <property type="match status" value="1"/>
</dbReference>
<dbReference type="HAMAP" id="MF_01431">
    <property type="entry name" value="Pyrim_hydro_RihA"/>
    <property type="match status" value="1"/>
</dbReference>
<dbReference type="InterPro" id="IPR015910">
    <property type="entry name" value="I/U_nuclsd_hydro_CS"/>
</dbReference>
<dbReference type="InterPro" id="IPR001910">
    <property type="entry name" value="Inosine/uridine_hydrolase_dom"/>
</dbReference>
<dbReference type="InterPro" id="IPR023186">
    <property type="entry name" value="IUNH"/>
</dbReference>
<dbReference type="InterPro" id="IPR022975">
    <property type="entry name" value="Pyrim_hydro_RihA"/>
</dbReference>
<dbReference type="InterPro" id="IPR036452">
    <property type="entry name" value="Ribo_hydro-like"/>
</dbReference>
<dbReference type="NCBIfam" id="NF007761">
    <property type="entry name" value="PRK10443.1"/>
    <property type="match status" value="1"/>
</dbReference>
<dbReference type="PANTHER" id="PTHR12304">
    <property type="entry name" value="INOSINE-URIDINE PREFERRING NUCLEOSIDE HYDROLASE"/>
    <property type="match status" value="1"/>
</dbReference>
<dbReference type="PANTHER" id="PTHR12304:SF4">
    <property type="entry name" value="URIDINE NUCLEOSIDASE"/>
    <property type="match status" value="1"/>
</dbReference>
<dbReference type="Pfam" id="PF01156">
    <property type="entry name" value="IU_nuc_hydro"/>
    <property type="match status" value="1"/>
</dbReference>
<dbReference type="SUPFAM" id="SSF53590">
    <property type="entry name" value="Nucleoside hydrolase"/>
    <property type="match status" value="1"/>
</dbReference>
<dbReference type="PROSITE" id="PS01247">
    <property type="entry name" value="IUNH"/>
    <property type="match status" value="1"/>
</dbReference>
<keyword id="KW-0326">Glycosidase</keyword>
<keyword id="KW-0378">Hydrolase</keyword>
<feature type="chain" id="PRO_1000215276" description="Pyrimidine-specific ribonucleoside hydrolase RihA">
    <location>
        <begin position="1"/>
        <end position="311"/>
    </location>
</feature>
<feature type="active site" evidence="1">
    <location>
        <position position="240"/>
    </location>
</feature>
<gene>
    <name evidence="1" type="primary">rihA</name>
    <name type="ordered locus">BWG_0522</name>
</gene>
<proteinExistence type="inferred from homology"/>
<protein>
    <recommendedName>
        <fullName evidence="1">Pyrimidine-specific ribonucleoside hydrolase RihA</fullName>
        <ecNumber evidence="1">3.2.-.-</ecNumber>
    </recommendedName>
    <alternativeName>
        <fullName evidence="1">Cytidine/uridine-specific hydrolase</fullName>
    </alternativeName>
</protein>
<sequence length="311" mass="33823">MALPILLDCDPGHDDAIAIVLALASPELDVKAITSSAGNQTPEKTLRNVLRMLTLLNRTDIPVAGGAVKPLMRELIIADNVHGESGLDGPALPEPTFAPQNCTAVELMAKTLRESAEPVTIVSTGPQTNVALLLNSHPELHSKIARIVIMGGAMGLGNWTPAAEFNIYVDPEAAEIVFQSGIPVVMAGLDVTHKAQIHVEDTERFRAIGNPVSTIVAELLDFFLEYHKDEKWGFVGAPLHDPCTIAWLLKPELFTSVERWVGVETQGKYTQGMTVVDYYYLTGNKPNATVMVDVDRQGFVDLLADRLKFYA</sequence>
<comment type="function">
    <text evidence="1">Hydrolyzes with equal efficiency cytidine or uridine to ribose and cytosine or uracil, respectively.</text>
</comment>
<comment type="similarity">
    <text evidence="1">Belongs to the IUNH family. RihA subfamily.</text>
</comment>
<organism>
    <name type="scientific">Escherichia coli (strain K12 / MC4100 / BW2952)</name>
    <dbReference type="NCBI Taxonomy" id="595496"/>
    <lineage>
        <taxon>Bacteria</taxon>
        <taxon>Pseudomonadati</taxon>
        <taxon>Pseudomonadota</taxon>
        <taxon>Gammaproteobacteria</taxon>
        <taxon>Enterobacterales</taxon>
        <taxon>Enterobacteriaceae</taxon>
        <taxon>Escherichia</taxon>
    </lineage>
</organism>
<name>RIHA_ECOBW</name>
<evidence type="ECO:0000255" key="1">
    <source>
        <dbReference type="HAMAP-Rule" id="MF_01431"/>
    </source>
</evidence>
<accession>C4ZWD8</accession>